<proteinExistence type="inferred from homology"/>
<evidence type="ECO:0000255" key="1">
    <source>
        <dbReference type="HAMAP-Rule" id="MF_00154"/>
    </source>
</evidence>
<protein>
    <recommendedName>
        <fullName evidence="1">Protoheme IX farnesyltransferase</fullName>
        <ecNumber evidence="1">2.5.1.141</ecNumber>
    </recommendedName>
    <alternativeName>
        <fullName evidence="1">Heme B farnesyltransferase</fullName>
    </alternativeName>
    <alternativeName>
        <fullName evidence="1">Heme O synthase</fullName>
    </alternativeName>
</protein>
<sequence>MSVIDTNQIDLAAPRISEAGVADYVALLKPRVMSLVVFTALVGMLLAPGDFHPVLAVTAMLCIAVGGGAAGALNMWYENDIDALMTRTANRPIPRGRVTRPEALTFGMTLSFFSVVTLGVLVNWIAAALLAFTIFFYVVIYTMWLKRSTAQNIVIGGAAGALPPVVAWAAVTGSLAVEPLLLFAIIFFWTPPHFWALALFRNDDYARAGVPMLPVVAGPDHTRLQILLYTIVLVAVAAAPWPLGYFDAVYGIASLALGGWMLVLAIRVYRHRSGSAALRATRNLFKFSILYLFALFSILLIEVVAKAVWQLFA</sequence>
<reference key="1">
    <citation type="submission" date="2006-03" db="EMBL/GenBank/DDBJ databases">
        <title>Complete sequence of Rhodopseudomonas palustris BisB5.</title>
        <authorList>
            <consortium name="US DOE Joint Genome Institute"/>
            <person name="Copeland A."/>
            <person name="Lucas S."/>
            <person name="Lapidus A."/>
            <person name="Barry K."/>
            <person name="Detter J.C."/>
            <person name="Glavina del Rio T."/>
            <person name="Hammon N."/>
            <person name="Israni S."/>
            <person name="Dalin E."/>
            <person name="Tice H."/>
            <person name="Pitluck S."/>
            <person name="Chain P."/>
            <person name="Malfatti S."/>
            <person name="Shin M."/>
            <person name="Vergez L."/>
            <person name="Schmutz J."/>
            <person name="Larimer F."/>
            <person name="Land M."/>
            <person name="Hauser L."/>
            <person name="Pelletier D.A."/>
            <person name="Kyrpides N."/>
            <person name="Lykidis A."/>
            <person name="Oda Y."/>
            <person name="Harwood C.S."/>
            <person name="Richardson P."/>
        </authorList>
    </citation>
    <scope>NUCLEOTIDE SEQUENCE [LARGE SCALE GENOMIC DNA]</scope>
    <source>
        <strain>BisB5</strain>
    </source>
</reference>
<gene>
    <name evidence="1" type="primary">ctaB</name>
    <name type="ordered locus">RPD_0816</name>
</gene>
<keyword id="KW-0997">Cell inner membrane</keyword>
<keyword id="KW-1003">Cell membrane</keyword>
<keyword id="KW-0350">Heme biosynthesis</keyword>
<keyword id="KW-0472">Membrane</keyword>
<keyword id="KW-0808">Transferase</keyword>
<keyword id="KW-0812">Transmembrane</keyword>
<keyword id="KW-1133">Transmembrane helix</keyword>
<comment type="function">
    <text evidence="1">Converts heme B (protoheme IX) to heme O by substitution of the vinyl group on carbon 2 of heme B porphyrin ring with a hydroxyethyl farnesyl side group.</text>
</comment>
<comment type="catalytic activity">
    <reaction evidence="1">
        <text>heme b + (2E,6E)-farnesyl diphosphate + H2O = Fe(II)-heme o + diphosphate</text>
        <dbReference type="Rhea" id="RHEA:28070"/>
        <dbReference type="ChEBI" id="CHEBI:15377"/>
        <dbReference type="ChEBI" id="CHEBI:33019"/>
        <dbReference type="ChEBI" id="CHEBI:60344"/>
        <dbReference type="ChEBI" id="CHEBI:60530"/>
        <dbReference type="ChEBI" id="CHEBI:175763"/>
        <dbReference type="EC" id="2.5.1.141"/>
    </reaction>
</comment>
<comment type="pathway">
    <text evidence="1">Porphyrin-containing compound metabolism; heme O biosynthesis; heme O from protoheme: step 1/1.</text>
</comment>
<comment type="subcellular location">
    <subcellularLocation>
        <location evidence="1">Cell inner membrane</location>
        <topology evidence="1">Multi-pass membrane protein</topology>
    </subcellularLocation>
</comment>
<comment type="miscellaneous">
    <text evidence="1">Carbon 2 of the heme B porphyrin ring is defined according to the Fischer nomenclature.</text>
</comment>
<comment type="similarity">
    <text evidence="1">Belongs to the UbiA prenyltransferase family. Protoheme IX farnesyltransferase subfamily.</text>
</comment>
<name>COXX_RHOPS</name>
<organism>
    <name type="scientific">Rhodopseudomonas palustris (strain BisB5)</name>
    <dbReference type="NCBI Taxonomy" id="316057"/>
    <lineage>
        <taxon>Bacteria</taxon>
        <taxon>Pseudomonadati</taxon>
        <taxon>Pseudomonadota</taxon>
        <taxon>Alphaproteobacteria</taxon>
        <taxon>Hyphomicrobiales</taxon>
        <taxon>Nitrobacteraceae</taxon>
        <taxon>Rhodopseudomonas</taxon>
    </lineage>
</organism>
<accession>Q13CY5</accession>
<feature type="chain" id="PRO_0000327142" description="Protoheme IX farnesyltransferase">
    <location>
        <begin position="1"/>
        <end position="313"/>
    </location>
</feature>
<feature type="transmembrane region" description="Helical" evidence="1">
    <location>
        <begin position="32"/>
        <end position="52"/>
    </location>
</feature>
<feature type="transmembrane region" description="Helical" evidence="1">
    <location>
        <begin position="53"/>
        <end position="73"/>
    </location>
</feature>
<feature type="transmembrane region" description="Helical" evidence="1">
    <location>
        <begin position="120"/>
        <end position="140"/>
    </location>
</feature>
<feature type="transmembrane region" description="Helical" evidence="1">
    <location>
        <begin position="153"/>
        <end position="173"/>
    </location>
</feature>
<feature type="transmembrane region" description="Helical" evidence="1">
    <location>
        <begin position="180"/>
        <end position="200"/>
    </location>
</feature>
<feature type="transmembrane region" description="Helical" evidence="1">
    <location>
        <begin position="226"/>
        <end position="246"/>
    </location>
</feature>
<feature type="transmembrane region" description="Helical" evidence="1">
    <location>
        <begin position="248"/>
        <end position="268"/>
    </location>
</feature>
<feature type="transmembrane region" description="Helical" evidence="1">
    <location>
        <begin position="284"/>
        <end position="304"/>
    </location>
</feature>
<dbReference type="EC" id="2.5.1.141" evidence="1"/>
<dbReference type="EMBL" id="CP000283">
    <property type="protein sequence ID" value="ABE38054.1"/>
    <property type="molecule type" value="Genomic_DNA"/>
</dbReference>
<dbReference type="SMR" id="Q13CY5"/>
<dbReference type="STRING" id="316057.RPD_0816"/>
<dbReference type="KEGG" id="rpd:RPD_0816"/>
<dbReference type="eggNOG" id="COG0109">
    <property type="taxonomic scope" value="Bacteria"/>
</dbReference>
<dbReference type="HOGENOM" id="CLU_029631_0_2_5"/>
<dbReference type="BioCyc" id="RPAL316057:RPD_RS04160-MONOMER"/>
<dbReference type="UniPathway" id="UPA00834">
    <property type="reaction ID" value="UER00712"/>
</dbReference>
<dbReference type="Proteomes" id="UP000001818">
    <property type="component" value="Chromosome"/>
</dbReference>
<dbReference type="GO" id="GO:0005886">
    <property type="term" value="C:plasma membrane"/>
    <property type="evidence" value="ECO:0007669"/>
    <property type="project" value="UniProtKB-SubCell"/>
</dbReference>
<dbReference type="GO" id="GO:0008495">
    <property type="term" value="F:protoheme IX farnesyltransferase activity"/>
    <property type="evidence" value="ECO:0007669"/>
    <property type="project" value="UniProtKB-UniRule"/>
</dbReference>
<dbReference type="GO" id="GO:0048034">
    <property type="term" value="P:heme O biosynthetic process"/>
    <property type="evidence" value="ECO:0007669"/>
    <property type="project" value="UniProtKB-UniRule"/>
</dbReference>
<dbReference type="CDD" id="cd13957">
    <property type="entry name" value="PT_UbiA_Cox10"/>
    <property type="match status" value="1"/>
</dbReference>
<dbReference type="FunFam" id="1.10.357.140:FF:000001">
    <property type="entry name" value="Protoheme IX farnesyltransferase"/>
    <property type="match status" value="1"/>
</dbReference>
<dbReference type="Gene3D" id="1.10.357.140">
    <property type="entry name" value="UbiA prenyltransferase"/>
    <property type="match status" value="1"/>
</dbReference>
<dbReference type="HAMAP" id="MF_00154">
    <property type="entry name" value="CyoE_CtaB"/>
    <property type="match status" value="1"/>
</dbReference>
<dbReference type="InterPro" id="IPR006369">
    <property type="entry name" value="Protohaem_IX_farnesylTrfase"/>
</dbReference>
<dbReference type="InterPro" id="IPR000537">
    <property type="entry name" value="UbiA_prenyltransferase"/>
</dbReference>
<dbReference type="InterPro" id="IPR030470">
    <property type="entry name" value="UbiA_prenylTrfase_CS"/>
</dbReference>
<dbReference type="InterPro" id="IPR044878">
    <property type="entry name" value="UbiA_sf"/>
</dbReference>
<dbReference type="NCBIfam" id="TIGR01473">
    <property type="entry name" value="cyoE_ctaB"/>
    <property type="match status" value="1"/>
</dbReference>
<dbReference type="NCBIfam" id="NF003349">
    <property type="entry name" value="PRK04375.1-2"/>
    <property type="match status" value="1"/>
</dbReference>
<dbReference type="PANTHER" id="PTHR43448:SF7">
    <property type="entry name" value="4-HYDROXYBENZOATE SOLANESYLTRANSFERASE"/>
    <property type="match status" value="1"/>
</dbReference>
<dbReference type="PANTHER" id="PTHR43448">
    <property type="entry name" value="PROTOHEME IX FARNESYLTRANSFERASE, MITOCHONDRIAL"/>
    <property type="match status" value="1"/>
</dbReference>
<dbReference type="Pfam" id="PF01040">
    <property type="entry name" value="UbiA"/>
    <property type="match status" value="1"/>
</dbReference>
<dbReference type="PROSITE" id="PS00943">
    <property type="entry name" value="UBIA"/>
    <property type="match status" value="1"/>
</dbReference>